<accession>Q9ZIM6</accession>
<accession>B9DLZ6</accession>
<sequence length="340" mass="39222">MVKQITDKLGRPIRDLRLSVTDRCNFRCDYCMPKEIFGDDFVFLPKDELLSFSEMERIARVYTHLGVKKIRITGGEPLMRRDLYKLIAALNEIEGVEDIGLTTNGLLLKKHGQKLYDAGLRRINVSLDAIDNELFQSINNRNIKADTILEQIDYAVSIGFKVKINVVVQKGVNDDQIIPMVQYFKDKNIQVRFIEFMDVGNDNGWDFSKVVSKDEMLSMIQEEFDIEAVEPKYYGEVAKYYRHKDNGAQFGLITSVSQSFCSTCTRARLSSDGKFYGCLFSTVDGFNVKEFMRSGVSDDELQAKFEELWNIRDDRYSDERTEQTVAIRKRKKINMNYIGG</sequence>
<organism>
    <name type="scientific">Staphylococcus carnosus (strain TM300)</name>
    <dbReference type="NCBI Taxonomy" id="396513"/>
    <lineage>
        <taxon>Bacteria</taxon>
        <taxon>Bacillati</taxon>
        <taxon>Bacillota</taxon>
        <taxon>Bacilli</taxon>
        <taxon>Bacillales</taxon>
        <taxon>Staphylococcaceae</taxon>
        <taxon>Staphylococcus</taxon>
    </lineage>
</organism>
<comment type="function">
    <text evidence="1">Catalyzes the cyclization of GTP to (8S)-3',8-cyclo-7,8-dihydroguanosine 5'-triphosphate.</text>
</comment>
<comment type="catalytic activity">
    <reaction evidence="1">
        <text>GTP + AH2 + S-adenosyl-L-methionine = (8S)-3',8-cyclo-7,8-dihydroguanosine 5'-triphosphate + 5'-deoxyadenosine + L-methionine + A + H(+)</text>
        <dbReference type="Rhea" id="RHEA:49576"/>
        <dbReference type="ChEBI" id="CHEBI:13193"/>
        <dbReference type="ChEBI" id="CHEBI:15378"/>
        <dbReference type="ChEBI" id="CHEBI:17319"/>
        <dbReference type="ChEBI" id="CHEBI:17499"/>
        <dbReference type="ChEBI" id="CHEBI:37565"/>
        <dbReference type="ChEBI" id="CHEBI:57844"/>
        <dbReference type="ChEBI" id="CHEBI:59789"/>
        <dbReference type="ChEBI" id="CHEBI:131766"/>
        <dbReference type="EC" id="4.1.99.22"/>
    </reaction>
</comment>
<comment type="cofactor">
    <cofactor evidence="1">
        <name>[4Fe-4S] cluster</name>
        <dbReference type="ChEBI" id="CHEBI:49883"/>
    </cofactor>
    <text evidence="1">Binds 2 [4Fe-4S] clusters. Binds 1 [4Fe-4S] cluster coordinated with 3 cysteines and an exchangeable S-adenosyl-L-methionine and 1 [4Fe-4S] cluster coordinated with 3 cysteines and the GTP-derived substrate.</text>
</comment>
<comment type="pathway">
    <text evidence="1">Cofactor biosynthesis; molybdopterin biosynthesis.</text>
</comment>
<comment type="subunit">
    <text evidence="1">Monomer and homodimer.</text>
</comment>
<comment type="similarity">
    <text evidence="1">Belongs to the radical SAM superfamily. MoaA family.</text>
</comment>
<protein>
    <recommendedName>
        <fullName evidence="1">GTP 3',8-cyclase</fullName>
        <ecNumber evidence="1">4.1.99.22</ecNumber>
    </recommendedName>
    <alternativeName>
        <fullName evidence="1">Molybdenum cofactor biosynthesis protein A</fullName>
    </alternativeName>
</protein>
<feature type="chain" id="PRO_0000153001" description="GTP 3',8-cyclase">
    <location>
        <begin position="1"/>
        <end position="340"/>
    </location>
</feature>
<feature type="domain" description="Radical SAM core" evidence="2">
    <location>
        <begin position="8"/>
        <end position="227"/>
    </location>
</feature>
<feature type="binding site" evidence="1">
    <location>
        <position position="17"/>
    </location>
    <ligand>
        <name>GTP</name>
        <dbReference type="ChEBI" id="CHEBI:37565"/>
    </ligand>
</feature>
<feature type="binding site" evidence="1">
    <location>
        <position position="24"/>
    </location>
    <ligand>
        <name>[4Fe-4S] cluster</name>
        <dbReference type="ChEBI" id="CHEBI:49883"/>
        <label>1</label>
        <note>4Fe-4S-S-AdoMet</note>
    </ligand>
</feature>
<feature type="binding site" evidence="1">
    <location>
        <position position="28"/>
    </location>
    <ligand>
        <name>[4Fe-4S] cluster</name>
        <dbReference type="ChEBI" id="CHEBI:49883"/>
        <label>1</label>
        <note>4Fe-4S-S-AdoMet</note>
    </ligand>
</feature>
<feature type="binding site" evidence="1">
    <location>
        <position position="30"/>
    </location>
    <ligand>
        <name>S-adenosyl-L-methionine</name>
        <dbReference type="ChEBI" id="CHEBI:59789"/>
    </ligand>
</feature>
<feature type="binding site" evidence="1">
    <location>
        <position position="31"/>
    </location>
    <ligand>
        <name>[4Fe-4S] cluster</name>
        <dbReference type="ChEBI" id="CHEBI:49883"/>
        <label>1</label>
        <note>4Fe-4S-S-AdoMet</note>
    </ligand>
</feature>
<feature type="binding site" evidence="1">
    <location>
        <position position="71"/>
    </location>
    <ligand>
        <name>GTP</name>
        <dbReference type="ChEBI" id="CHEBI:37565"/>
    </ligand>
</feature>
<feature type="binding site" evidence="1">
    <location>
        <position position="75"/>
    </location>
    <ligand>
        <name>S-adenosyl-L-methionine</name>
        <dbReference type="ChEBI" id="CHEBI:59789"/>
    </ligand>
</feature>
<feature type="binding site" evidence="1">
    <location>
        <position position="102"/>
    </location>
    <ligand>
        <name>GTP</name>
        <dbReference type="ChEBI" id="CHEBI:37565"/>
    </ligand>
</feature>
<feature type="binding site" evidence="1">
    <location>
        <position position="126"/>
    </location>
    <ligand>
        <name>S-adenosyl-L-methionine</name>
        <dbReference type="ChEBI" id="CHEBI:59789"/>
    </ligand>
</feature>
<feature type="binding site" evidence="1">
    <location>
        <position position="163"/>
    </location>
    <ligand>
        <name>GTP</name>
        <dbReference type="ChEBI" id="CHEBI:37565"/>
    </ligand>
</feature>
<feature type="binding site" evidence="1">
    <location>
        <position position="197"/>
    </location>
    <ligand>
        <name>S-adenosyl-L-methionine</name>
        <dbReference type="ChEBI" id="CHEBI:59789"/>
    </ligand>
</feature>
<feature type="binding site" evidence="1">
    <location>
        <position position="261"/>
    </location>
    <ligand>
        <name>[4Fe-4S] cluster</name>
        <dbReference type="ChEBI" id="CHEBI:49883"/>
        <label>2</label>
        <note>4Fe-4S-substrate</note>
    </ligand>
</feature>
<feature type="binding site" evidence="1">
    <location>
        <position position="264"/>
    </location>
    <ligand>
        <name>[4Fe-4S] cluster</name>
        <dbReference type="ChEBI" id="CHEBI:49883"/>
        <label>2</label>
        <note>4Fe-4S-substrate</note>
    </ligand>
</feature>
<feature type="binding site" evidence="1">
    <location>
        <begin position="266"/>
        <end position="268"/>
    </location>
    <ligand>
        <name>GTP</name>
        <dbReference type="ChEBI" id="CHEBI:37565"/>
    </ligand>
</feature>
<feature type="binding site" evidence="1">
    <location>
        <position position="278"/>
    </location>
    <ligand>
        <name>[4Fe-4S] cluster</name>
        <dbReference type="ChEBI" id="CHEBI:49883"/>
        <label>2</label>
        <note>4Fe-4S-substrate</note>
    </ligand>
</feature>
<evidence type="ECO:0000255" key="1">
    <source>
        <dbReference type="HAMAP-Rule" id="MF_01225"/>
    </source>
</evidence>
<evidence type="ECO:0000255" key="2">
    <source>
        <dbReference type="PROSITE-ProRule" id="PRU01266"/>
    </source>
</evidence>
<gene>
    <name evidence="1" type="primary">moaA</name>
    <name type="ordered locus">Sca_1756</name>
</gene>
<name>MOAA_STACT</name>
<reference key="1">
    <citation type="journal article" date="1998" name="FEMS Microbiol. Lett.">
        <title>Characterization of moeB- part of the molybdenum cofactor biosynthesis gene cluster in Staphylococcus carnosus.</title>
        <authorList>
            <person name="Neubauer H."/>
            <person name="Pantel I."/>
            <person name="Goetz F."/>
        </authorList>
    </citation>
    <scope>NUCLEOTIDE SEQUENCE [GENOMIC DNA]</scope>
</reference>
<reference key="2">
    <citation type="journal article" date="2009" name="Appl. Environ. Microbiol.">
        <title>Genome analysis of the meat starter culture bacterium Staphylococcus carnosus TM300.</title>
        <authorList>
            <person name="Rosenstein R."/>
            <person name="Nerz C."/>
            <person name="Biswas L."/>
            <person name="Resch A."/>
            <person name="Raddatz G."/>
            <person name="Schuster S.C."/>
            <person name="Goetz F."/>
        </authorList>
    </citation>
    <scope>NUCLEOTIDE SEQUENCE [LARGE SCALE GENOMIC DNA]</scope>
    <source>
        <strain>TM300</strain>
    </source>
</reference>
<dbReference type="EC" id="4.1.99.22" evidence="1"/>
<dbReference type="EMBL" id="AF109295">
    <property type="protein sequence ID" value="AAC83144.1"/>
    <property type="molecule type" value="Genomic_DNA"/>
</dbReference>
<dbReference type="EMBL" id="AM295250">
    <property type="protein sequence ID" value="CAL28662.1"/>
    <property type="molecule type" value="Genomic_DNA"/>
</dbReference>
<dbReference type="RefSeq" id="WP_015900998.1">
    <property type="nucleotide sequence ID" value="NC_012121.1"/>
</dbReference>
<dbReference type="SMR" id="Q9ZIM6"/>
<dbReference type="GeneID" id="93794215"/>
<dbReference type="KEGG" id="sca:SCA_1756"/>
<dbReference type="eggNOG" id="COG2896">
    <property type="taxonomic scope" value="Bacteria"/>
</dbReference>
<dbReference type="HOGENOM" id="CLU_009273_0_1_9"/>
<dbReference type="OrthoDB" id="9763993at2"/>
<dbReference type="BioCyc" id="SCAR396513:SCA_RS08940-MONOMER"/>
<dbReference type="UniPathway" id="UPA00344"/>
<dbReference type="Proteomes" id="UP000000444">
    <property type="component" value="Chromosome"/>
</dbReference>
<dbReference type="GO" id="GO:0051539">
    <property type="term" value="F:4 iron, 4 sulfur cluster binding"/>
    <property type="evidence" value="ECO:0007669"/>
    <property type="project" value="UniProtKB-UniRule"/>
</dbReference>
<dbReference type="GO" id="GO:0061799">
    <property type="term" value="F:cyclic pyranopterin monophosphate synthase activity"/>
    <property type="evidence" value="ECO:0007669"/>
    <property type="project" value="TreeGrafter"/>
</dbReference>
<dbReference type="GO" id="GO:0061798">
    <property type="term" value="F:GTP 3',8'-cyclase activity"/>
    <property type="evidence" value="ECO:0007669"/>
    <property type="project" value="UniProtKB-UniRule"/>
</dbReference>
<dbReference type="GO" id="GO:0005525">
    <property type="term" value="F:GTP binding"/>
    <property type="evidence" value="ECO:0007669"/>
    <property type="project" value="UniProtKB-UniRule"/>
</dbReference>
<dbReference type="GO" id="GO:0046872">
    <property type="term" value="F:metal ion binding"/>
    <property type="evidence" value="ECO:0007669"/>
    <property type="project" value="UniProtKB-KW"/>
</dbReference>
<dbReference type="GO" id="GO:1904047">
    <property type="term" value="F:S-adenosyl-L-methionine binding"/>
    <property type="evidence" value="ECO:0007669"/>
    <property type="project" value="UniProtKB-UniRule"/>
</dbReference>
<dbReference type="GO" id="GO:0006777">
    <property type="term" value="P:Mo-molybdopterin cofactor biosynthetic process"/>
    <property type="evidence" value="ECO:0007669"/>
    <property type="project" value="UniProtKB-UniRule"/>
</dbReference>
<dbReference type="CDD" id="cd01335">
    <property type="entry name" value="Radical_SAM"/>
    <property type="match status" value="1"/>
</dbReference>
<dbReference type="CDD" id="cd21117">
    <property type="entry name" value="Twitch_MoaA"/>
    <property type="match status" value="1"/>
</dbReference>
<dbReference type="Gene3D" id="3.20.20.70">
    <property type="entry name" value="Aldolase class I"/>
    <property type="match status" value="1"/>
</dbReference>
<dbReference type="HAMAP" id="MF_01225_B">
    <property type="entry name" value="MoaA_B"/>
    <property type="match status" value="1"/>
</dbReference>
<dbReference type="InterPro" id="IPR013785">
    <property type="entry name" value="Aldolase_TIM"/>
</dbReference>
<dbReference type="InterPro" id="IPR006638">
    <property type="entry name" value="Elp3/MiaA/NifB-like_rSAM"/>
</dbReference>
<dbReference type="InterPro" id="IPR013483">
    <property type="entry name" value="MoaA"/>
</dbReference>
<dbReference type="InterPro" id="IPR000385">
    <property type="entry name" value="MoaA_NifB_PqqE_Fe-S-bd_CS"/>
</dbReference>
<dbReference type="InterPro" id="IPR010505">
    <property type="entry name" value="MoaA_twitch"/>
</dbReference>
<dbReference type="InterPro" id="IPR050105">
    <property type="entry name" value="MoCo_biosynth_MoaA/MoaC"/>
</dbReference>
<dbReference type="InterPro" id="IPR007197">
    <property type="entry name" value="rSAM"/>
</dbReference>
<dbReference type="NCBIfam" id="TIGR02666">
    <property type="entry name" value="moaA"/>
    <property type="match status" value="1"/>
</dbReference>
<dbReference type="PANTHER" id="PTHR22960:SF0">
    <property type="entry name" value="MOLYBDENUM COFACTOR BIOSYNTHESIS PROTEIN 1"/>
    <property type="match status" value="1"/>
</dbReference>
<dbReference type="PANTHER" id="PTHR22960">
    <property type="entry name" value="MOLYBDOPTERIN COFACTOR SYNTHESIS PROTEIN A"/>
    <property type="match status" value="1"/>
</dbReference>
<dbReference type="Pfam" id="PF13353">
    <property type="entry name" value="Fer4_12"/>
    <property type="match status" value="1"/>
</dbReference>
<dbReference type="Pfam" id="PF06463">
    <property type="entry name" value="Mob_synth_C"/>
    <property type="match status" value="1"/>
</dbReference>
<dbReference type="Pfam" id="PF04055">
    <property type="entry name" value="Radical_SAM"/>
    <property type="match status" value="1"/>
</dbReference>
<dbReference type="SFLD" id="SFLDF00276">
    <property type="entry name" value="cyclic_pyranopterin_phosphate"/>
    <property type="match status" value="1"/>
</dbReference>
<dbReference type="SFLD" id="SFLDG01383">
    <property type="entry name" value="cyclic_pyranopterin_phosphate"/>
    <property type="match status" value="1"/>
</dbReference>
<dbReference type="SMART" id="SM00729">
    <property type="entry name" value="Elp3"/>
    <property type="match status" value="1"/>
</dbReference>
<dbReference type="SUPFAM" id="SSF102114">
    <property type="entry name" value="Radical SAM enzymes"/>
    <property type="match status" value="1"/>
</dbReference>
<dbReference type="PROSITE" id="PS01305">
    <property type="entry name" value="MOAA_NIFB_PQQE"/>
    <property type="match status" value="1"/>
</dbReference>
<dbReference type="PROSITE" id="PS51918">
    <property type="entry name" value="RADICAL_SAM"/>
    <property type="match status" value="1"/>
</dbReference>
<keyword id="KW-0004">4Fe-4S</keyword>
<keyword id="KW-0342">GTP-binding</keyword>
<keyword id="KW-0408">Iron</keyword>
<keyword id="KW-0411">Iron-sulfur</keyword>
<keyword id="KW-0456">Lyase</keyword>
<keyword id="KW-0479">Metal-binding</keyword>
<keyword id="KW-0501">Molybdenum cofactor biosynthesis</keyword>
<keyword id="KW-0547">Nucleotide-binding</keyword>
<keyword id="KW-1185">Reference proteome</keyword>
<keyword id="KW-0949">S-adenosyl-L-methionine</keyword>
<proteinExistence type="inferred from homology"/>